<evidence type="ECO:0000255" key="1">
    <source>
        <dbReference type="HAMAP-Rule" id="MF_00462"/>
    </source>
</evidence>
<feature type="chain" id="PRO_1000060342" description="Ion-translocating oxidoreductase complex subunit D">
    <location>
        <begin position="1"/>
        <end position="352"/>
    </location>
</feature>
<feature type="transmembrane region" description="Helical" evidence="1">
    <location>
        <begin position="20"/>
        <end position="40"/>
    </location>
</feature>
<feature type="transmembrane region" description="Helical" evidence="1">
    <location>
        <begin position="42"/>
        <end position="62"/>
    </location>
</feature>
<feature type="transmembrane region" description="Helical" evidence="1">
    <location>
        <begin position="78"/>
        <end position="109"/>
    </location>
</feature>
<feature type="transmembrane region" description="Helical" evidence="1">
    <location>
        <begin position="123"/>
        <end position="143"/>
    </location>
</feature>
<feature type="transmembrane region" description="Helical" evidence="1">
    <location>
        <begin position="148"/>
        <end position="168"/>
    </location>
</feature>
<feature type="transmembrane region" description="Helical" evidence="1">
    <location>
        <begin position="214"/>
        <end position="234"/>
    </location>
</feature>
<feature type="transmembrane region" description="Helical" evidence="1">
    <location>
        <begin position="242"/>
        <end position="262"/>
    </location>
</feature>
<feature type="transmembrane region" description="Helical" evidence="1">
    <location>
        <begin position="267"/>
        <end position="287"/>
    </location>
</feature>
<feature type="transmembrane region" description="Helical" evidence="1">
    <location>
        <begin position="301"/>
        <end position="321"/>
    </location>
</feature>
<feature type="transmembrane region" description="Helical" evidence="1">
    <location>
        <begin position="322"/>
        <end position="342"/>
    </location>
</feature>
<feature type="modified residue" description="FMN phosphoryl threonine" evidence="1">
    <location>
        <position position="187"/>
    </location>
</feature>
<proteinExistence type="inferred from homology"/>
<sequence>MVFRIASSPYTHNQRQTSRIMLLVLLAAVPGIAAQLWFFGWGTLVQILLASVSALLAEALVLKLRKQSVAATLKDNSALLTGLLLAVSIPPLAPWWMVVLGTVFAVIIAKQLYGGLGQNPFNPAMIGYVVLLISFPVQMTSWLPPHEIAVNIPGFIDAIQVIFSGHTASGGDMNTLRLGIDGISQATPLDTFKTSVRAGHSVEQIMQYPIYSGILAGAGWQWVNLAWLAGGVWLLWQKAIRWHIPLSFLVTLTLCATLGWLFSPETLAAPQIHLLSGATMLGAFFILTDPVTASTTNRGRLIFGALAGLLVWLIRSFGGYPDGVAFAVLLANITVPLIDYYTRPRVYGHRKG</sequence>
<organism>
    <name type="scientific">Escherichia coli O139:H28 (strain E24377A / ETEC)</name>
    <dbReference type="NCBI Taxonomy" id="331111"/>
    <lineage>
        <taxon>Bacteria</taxon>
        <taxon>Pseudomonadati</taxon>
        <taxon>Pseudomonadota</taxon>
        <taxon>Gammaproteobacteria</taxon>
        <taxon>Enterobacterales</taxon>
        <taxon>Enterobacteriaceae</taxon>
        <taxon>Escherichia</taxon>
    </lineage>
</organism>
<keyword id="KW-0997">Cell inner membrane</keyword>
<keyword id="KW-1003">Cell membrane</keyword>
<keyword id="KW-0249">Electron transport</keyword>
<keyword id="KW-0285">Flavoprotein</keyword>
<keyword id="KW-0288">FMN</keyword>
<keyword id="KW-0472">Membrane</keyword>
<keyword id="KW-0597">Phosphoprotein</keyword>
<keyword id="KW-1185">Reference proteome</keyword>
<keyword id="KW-1278">Translocase</keyword>
<keyword id="KW-0812">Transmembrane</keyword>
<keyword id="KW-1133">Transmembrane helix</keyword>
<keyword id="KW-0813">Transport</keyword>
<name>RSXD_ECO24</name>
<comment type="function">
    <text evidence="1">Part of a membrane-bound complex that couples electron transfer with translocation of ions across the membrane. Required to maintain the reduced state of SoxR.</text>
</comment>
<comment type="cofactor">
    <cofactor evidence="1">
        <name>FMN</name>
        <dbReference type="ChEBI" id="CHEBI:58210"/>
    </cofactor>
</comment>
<comment type="subunit">
    <text evidence="1">The complex is composed of six subunits: RsxA, RsxB, RsxC, RsxD, RsxE and RsxG.</text>
</comment>
<comment type="subcellular location">
    <subcellularLocation>
        <location evidence="1">Cell inner membrane</location>
        <topology evidence="1">Multi-pass membrane protein</topology>
    </subcellularLocation>
</comment>
<comment type="similarity">
    <text evidence="1">Belongs to the NqrB/RnfD family.</text>
</comment>
<protein>
    <recommendedName>
        <fullName evidence="1">Ion-translocating oxidoreductase complex subunit D</fullName>
        <ecNumber evidence="1">7.-.-.-</ecNumber>
    </recommendedName>
    <alternativeName>
        <fullName evidence="1">Rsx electron transport complex subunit D</fullName>
    </alternativeName>
</protein>
<reference key="1">
    <citation type="journal article" date="2008" name="J. Bacteriol.">
        <title>The pangenome structure of Escherichia coli: comparative genomic analysis of E. coli commensal and pathogenic isolates.</title>
        <authorList>
            <person name="Rasko D.A."/>
            <person name="Rosovitz M.J."/>
            <person name="Myers G.S.A."/>
            <person name="Mongodin E.F."/>
            <person name="Fricke W.F."/>
            <person name="Gajer P."/>
            <person name="Crabtree J."/>
            <person name="Sebaihia M."/>
            <person name="Thomson N.R."/>
            <person name="Chaudhuri R."/>
            <person name="Henderson I.R."/>
            <person name="Sperandio V."/>
            <person name="Ravel J."/>
        </authorList>
    </citation>
    <scope>NUCLEOTIDE SEQUENCE [LARGE SCALE GENOMIC DNA]</scope>
    <source>
        <strain>E24377A / ETEC</strain>
    </source>
</reference>
<accession>A7ZM90</accession>
<dbReference type="EC" id="7.-.-.-" evidence="1"/>
<dbReference type="EMBL" id="CP000800">
    <property type="protein sequence ID" value="ABV17867.1"/>
    <property type="molecule type" value="Genomic_DNA"/>
</dbReference>
<dbReference type="RefSeq" id="WP_000231931.1">
    <property type="nucleotide sequence ID" value="NC_009801.1"/>
</dbReference>
<dbReference type="SMR" id="A7ZM90"/>
<dbReference type="GeneID" id="75204475"/>
<dbReference type="KEGG" id="ecw:EcE24377A_1838"/>
<dbReference type="HOGENOM" id="CLU_042020_0_0_6"/>
<dbReference type="Proteomes" id="UP000001122">
    <property type="component" value="Chromosome"/>
</dbReference>
<dbReference type="GO" id="GO:0005886">
    <property type="term" value="C:plasma membrane"/>
    <property type="evidence" value="ECO:0007669"/>
    <property type="project" value="UniProtKB-SubCell"/>
</dbReference>
<dbReference type="GO" id="GO:0022900">
    <property type="term" value="P:electron transport chain"/>
    <property type="evidence" value="ECO:0007669"/>
    <property type="project" value="UniProtKB-UniRule"/>
</dbReference>
<dbReference type="GO" id="GO:0055085">
    <property type="term" value="P:transmembrane transport"/>
    <property type="evidence" value="ECO:0007669"/>
    <property type="project" value="InterPro"/>
</dbReference>
<dbReference type="HAMAP" id="MF_00462">
    <property type="entry name" value="RsxD_RnfD"/>
    <property type="match status" value="1"/>
</dbReference>
<dbReference type="InterPro" id="IPR004338">
    <property type="entry name" value="NqrB/RnfD"/>
</dbReference>
<dbReference type="InterPro" id="IPR011303">
    <property type="entry name" value="RnfD_bac"/>
</dbReference>
<dbReference type="NCBIfam" id="NF002011">
    <property type="entry name" value="PRK00816.1"/>
    <property type="match status" value="1"/>
</dbReference>
<dbReference type="NCBIfam" id="TIGR01946">
    <property type="entry name" value="rnfD"/>
    <property type="match status" value="1"/>
</dbReference>
<dbReference type="PANTHER" id="PTHR30578">
    <property type="entry name" value="ELECTRON TRANSPORT COMPLEX PROTEIN RNFD"/>
    <property type="match status" value="1"/>
</dbReference>
<dbReference type="PANTHER" id="PTHR30578:SF0">
    <property type="entry name" value="ION-TRANSLOCATING OXIDOREDUCTASE COMPLEX SUBUNIT D"/>
    <property type="match status" value="1"/>
</dbReference>
<dbReference type="Pfam" id="PF03116">
    <property type="entry name" value="NQR2_RnfD_RnfE"/>
    <property type="match status" value="1"/>
</dbReference>
<gene>
    <name evidence="1" type="primary">rsxD</name>
    <name type="synonym">rnfD</name>
    <name type="ordered locus">EcE24377A_1838</name>
</gene>